<gene>
    <name type="primary">HEY1</name>
    <name type="synonym">BHLHB31</name>
    <name type="synonym">CHF2</name>
    <name type="synonym">HERP2</name>
    <name type="synonym">HESR1</name>
    <name type="synonym">HRT1</name>
</gene>
<name>HEY1_HUMAN</name>
<dbReference type="EMBL" id="AF151522">
    <property type="protein sequence ID" value="AAD38967.1"/>
    <property type="molecule type" value="mRNA"/>
</dbReference>
<dbReference type="EMBL" id="AF176422">
    <property type="protein sequence ID" value="AAD51749.1"/>
    <property type="molecule type" value="mRNA"/>
</dbReference>
<dbReference type="EMBL" id="AJ272214">
    <property type="protein sequence ID" value="CAB75715.1"/>
    <property type="molecule type" value="mRNA"/>
</dbReference>
<dbReference type="EMBL" id="AF232239">
    <property type="protein sequence ID" value="AAF37297.1"/>
    <property type="molecule type" value="mRNA"/>
</dbReference>
<dbReference type="EMBL" id="AF311883">
    <property type="protein sequence ID" value="AAG31156.1"/>
    <property type="molecule type" value="mRNA"/>
</dbReference>
<dbReference type="EMBL" id="BT020065">
    <property type="protein sequence ID" value="AAV38868.1"/>
    <property type="molecule type" value="mRNA"/>
</dbReference>
<dbReference type="EMBL" id="AK092437">
    <property type="protein sequence ID" value="BAC03890.1"/>
    <property type="molecule type" value="mRNA"/>
</dbReference>
<dbReference type="EMBL" id="AK313271">
    <property type="protein sequence ID" value="BAG36080.1"/>
    <property type="molecule type" value="mRNA"/>
</dbReference>
<dbReference type="EMBL" id="AC016240">
    <property type="status" value="NOT_ANNOTATED_CDS"/>
    <property type="molecule type" value="Genomic_DNA"/>
</dbReference>
<dbReference type="EMBL" id="CH471068">
    <property type="protein sequence ID" value="EAW87066.1"/>
    <property type="molecule type" value="Genomic_DNA"/>
</dbReference>
<dbReference type="EMBL" id="BC001873">
    <property type="protein sequence ID" value="AAH01873.1"/>
    <property type="molecule type" value="mRNA"/>
</dbReference>
<dbReference type="CCDS" id="CCDS43749.1">
    <molecule id="Q9Y5J3-2"/>
</dbReference>
<dbReference type="CCDS" id="CCDS6225.1">
    <molecule id="Q9Y5J3-1"/>
</dbReference>
<dbReference type="RefSeq" id="NP_001035798.1">
    <molecule id="Q9Y5J3-2"/>
    <property type="nucleotide sequence ID" value="NM_001040708.2"/>
</dbReference>
<dbReference type="RefSeq" id="NP_001269780.1">
    <property type="nucleotide sequence ID" value="NM_001282851.1"/>
</dbReference>
<dbReference type="RefSeq" id="NP_036390.3">
    <molecule id="Q9Y5J3-1"/>
    <property type="nucleotide sequence ID" value="NM_012258.3"/>
</dbReference>
<dbReference type="PDB" id="2DB7">
    <property type="method" value="X-ray"/>
    <property type="resolution" value="1.90 A"/>
    <property type="chains" value="A/B=111-167"/>
</dbReference>
<dbReference type="PDBsum" id="2DB7"/>
<dbReference type="SMR" id="Q9Y5J3"/>
<dbReference type="BioGRID" id="117025">
    <property type="interactions" value="140"/>
</dbReference>
<dbReference type="CORUM" id="Q9Y5J3"/>
<dbReference type="ELM" id="Q9Y5J3"/>
<dbReference type="FunCoup" id="Q9Y5J3">
    <property type="interactions" value="2231"/>
</dbReference>
<dbReference type="IntAct" id="Q9Y5J3">
    <property type="interactions" value="37"/>
</dbReference>
<dbReference type="MINT" id="Q9Y5J3"/>
<dbReference type="STRING" id="9606.ENSP00000338272"/>
<dbReference type="TCDB" id="3.A.16.1.4">
    <property type="family name" value="the endoplasmic reticular retrotranslocon (er-rt) family"/>
</dbReference>
<dbReference type="GlyGen" id="Q9Y5J3">
    <property type="glycosylation" value="1 site, 1 O-linked glycan (1 site)"/>
</dbReference>
<dbReference type="iPTMnet" id="Q9Y5J3"/>
<dbReference type="PhosphoSitePlus" id="Q9Y5J3"/>
<dbReference type="BioMuta" id="HEY1"/>
<dbReference type="DMDM" id="13124298"/>
<dbReference type="jPOST" id="Q9Y5J3"/>
<dbReference type="MassIVE" id="Q9Y5J3"/>
<dbReference type="PaxDb" id="9606-ENSP00000338272"/>
<dbReference type="PeptideAtlas" id="Q9Y5J3"/>
<dbReference type="ProteomicsDB" id="86418">
    <molecule id="Q9Y5J3-1"/>
</dbReference>
<dbReference type="ProteomicsDB" id="86419">
    <molecule id="Q9Y5J3-2"/>
</dbReference>
<dbReference type="Pumba" id="Q9Y5J3"/>
<dbReference type="Antibodypedia" id="12406">
    <property type="antibodies" value="440 antibodies from 32 providers"/>
</dbReference>
<dbReference type="DNASU" id="23462"/>
<dbReference type="Ensembl" id="ENST00000337919.9">
    <molecule id="Q9Y5J3-2"/>
    <property type="protein sequence ID" value="ENSP00000338272.5"/>
    <property type="gene ID" value="ENSG00000164683.19"/>
</dbReference>
<dbReference type="Ensembl" id="ENST00000354724.8">
    <molecule id="Q9Y5J3-1"/>
    <property type="protein sequence ID" value="ENSP00000346761.3"/>
    <property type="gene ID" value="ENSG00000164683.19"/>
</dbReference>
<dbReference type="GeneID" id="23462"/>
<dbReference type="KEGG" id="hsa:23462"/>
<dbReference type="MANE-Select" id="ENST00000354724.8">
    <property type="protein sequence ID" value="ENSP00000346761.3"/>
    <property type="RefSeq nucleotide sequence ID" value="NM_012258.4"/>
    <property type="RefSeq protein sequence ID" value="NP_036390.3"/>
</dbReference>
<dbReference type="UCSC" id="uc003ybl.4">
    <molecule id="Q9Y5J3-1"/>
    <property type="organism name" value="human"/>
</dbReference>
<dbReference type="AGR" id="HGNC:4880"/>
<dbReference type="CTD" id="23462"/>
<dbReference type="DisGeNET" id="23462"/>
<dbReference type="GeneCards" id="HEY1"/>
<dbReference type="HGNC" id="HGNC:4880">
    <property type="gene designation" value="HEY1"/>
</dbReference>
<dbReference type="HPA" id="ENSG00000164683">
    <property type="expression patterns" value="Tissue enhanced (brain)"/>
</dbReference>
<dbReference type="MalaCards" id="HEY1"/>
<dbReference type="MIM" id="602953">
    <property type="type" value="gene"/>
</dbReference>
<dbReference type="neXtProt" id="NX_Q9Y5J3"/>
<dbReference type="OpenTargets" id="ENSG00000164683"/>
<dbReference type="PharmGKB" id="PA29258"/>
<dbReference type="VEuPathDB" id="HostDB:ENSG00000164683"/>
<dbReference type="eggNOG" id="KOG4304">
    <property type="taxonomic scope" value="Eukaryota"/>
</dbReference>
<dbReference type="GeneTree" id="ENSGT00940000157068"/>
<dbReference type="HOGENOM" id="CLU_048294_2_0_1"/>
<dbReference type="InParanoid" id="Q9Y5J3"/>
<dbReference type="OMA" id="QIPWGGA"/>
<dbReference type="OrthoDB" id="6371181at2759"/>
<dbReference type="PAN-GO" id="Q9Y5J3">
    <property type="GO annotations" value="9 GO annotations based on evolutionary models"/>
</dbReference>
<dbReference type="PhylomeDB" id="Q9Y5J3"/>
<dbReference type="TreeFam" id="TF323617"/>
<dbReference type="PathwayCommons" id="Q9Y5J3"/>
<dbReference type="Reactome" id="R-HSA-2122947">
    <property type="pathway name" value="NOTCH1 Intracellular Domain Regulates Transcription"/>
</dbReference>
<dbReference type="Reactome" id="R-HSA-2644606">
    <property type="pathway name" value="Constitutive Signaling by NOTCH1 PEST Domain Mutants"/>
</dbReference>
<dbReference type="Reactome" id="R-HSA-2894862">
    <property type="pathway name" value="Constitutive Signaling by NOTCH1 HD+PEST Domain Mutants"/>
</dbReference>
<dbReference type="Reactome" id="R-HSA-8940973">
    <property type="pathway name" value="RUNX2 regulates osteoblast differentiation"/>
</dbReference>
<dbReference type="Reactome" id="R-HSA-9013508">
    <property type="pathway name" value="NOTCH3 Intracellular Domain Regulates Transcription"/>
</dbReference>
<dbReference type="Reactome" id="R-HSA-9013695">
    <property type="pathway name" value="NOTCH4 Intracellular Domain Regulates Transcription"/>
</dbReference>
<dbReference type="Reactome" id="R-HSA-9733709">
    <property type="pathway name" value="Cardiogenesis"/>
</dbReference>
<dbReference type="SignaLink" id="Q9Y5J3"/>
<dbReference type="SIGNOR" id="Q9Y5J3"/>
<dbReference type="BioGRID-ORCS" id="23462">
    <property type="hits" value="10 hits in 1176 CRISPR screens"/>
</dbReference>
<dbReference type="ChiTaRS" id="HEY1">
    <property type="organism name" value="human"/>
</dbReference>
<dbReference type="EvolutionaryTrace" id="Q9Y5J3"/>
<dbReference type="GeneWiki" id="HEY1"/>
<dbReference type="GenomeRNAi" id="23462"/>
<dbReference type="Pharos" id="Q9Y5J3">
    <property type="development level" value="Tbio"/>
</dbReference>
<dbReference type="PRO" id="PR:Q9Y5J3"/>
<dbReference type="Proteomes" id="UP000005640">
    <property type="component" value="Chromosome 8"/>
</dbReference>
<dbReference type="RNAct" id="Q9Y5J3">
    <property type="molecule type" value="protein"/>
</dbReference>
<dbReference type="Bgee" id="ENSG00000164683">
    <property type="expression patterns" value="Expressed in endothelial cell and 207 other cell types or tissues"/>
</dbReference>
<dbReference type="ExpressionAtlas" id="Q9Y5J3">
    <property type="expression patterns" value="baseline and differential"/>
</dbReference>
<dbReference type="GO" id="GO:0000785">
    <property type="term" value="C:chromatin"/>
    <property type="evidence" value="ECO:0000247"/>
    <property type="project" value="NTNU_SB"/>
</dbReference>
<dbReference type="GO" id="GO:0005737">
    <property type="term" value="C:cytoplasm"/>
    <property type="evidence" value="ECO:0000250"/>
    <property type="project" value="UniProtKB"/>
</dbReference>
<dbReference type="GO" id="GO:0005654">
    <property type="term" value="C:nucleoplasm"/>
    <property type="evidence" value="ECO:0000304"/>
    <property type="project" value="Reactome"/>
</dbReference>
<dbReference type="GO" id="GO:0005634">
    <property type="term" value="C:nucleus"/>
    <property type="evidence" value="ECO:0000250"/>
    <property type="project" value="UniProtKB"/>
</dbReference>
<dbReference type="GO" id="GO:0000987">
    <property type="term" value="F:cis-regulatory region sequence-specific DNA binding"/>
    <property type="evidence" value="ECO:0000314"/>
    <property type="project" value="BHF-UCL"/>
</dbReference>
<dbReference type="GO" id="GO:0003700">
    <property type="term" value="F:DNA-binding transcription factor activity"/>
    <property type="evidence" value="ECO:0000314"/>
    <property type="project" value="UniProtKB"/>
</dbReference>
<dbReference type="GO" id="GO:0000981">
    <property type="term" value="F:DNA-binding transcription factor activity, RNA polymerase II-specific"/>
    <property type="evidence" value="ECO:0000314"/>
    <property type="project" value="UniProtKB"/>
</dbReference>
<dbReference type="GO" id="GO:0001227">
    <property type="term" value="F:DNA-binding transcription repressor activity, RNA polymerase II-specific"/>
    <property type="evidence" value="ECO:0000314"/>
    <property type="project" value="BHF-UCL"/>
</dbReference>
<dbReference type="GO" id="GO:0046983">
    <property type="term" value="F:protein dimerization activity"/>
    <property type="evidence" value="ECO:0007669"/>
    <property type="project" value="InterPro"/>
</dbReference>
<dbReference type="GO" id="GO:0000978">
    <property type="term" value="F:RNA polymerase II cis-regulatory region sequence-specific DNA binding"/>
    <property type="evidence" value="ECO:0000318"/>
    <property type="project" value="GO_Central"/>
</dbReference>
<dbReference type="GO" id="GO:0061629">
    <property type="term" value="F:RNA polymerase II-specific DNA-binding transcription factor binding"/>
    <property type="evidence" value="ECO:0000353"/>
    <property type="project" value="BHF-UCL"/>
</dbReference>
<dbReference type="GO" id="GO:1990837">
    <property type="term" value="F:sequence-specific double-stranded DNA binding"/>
    <property type="evidence" value="ECO:0000314"/>
    <property type="project" value="ARUK-UCL"/>
</dbReference>
<dbReference type="GO" id="GO:0001525">
    <property type="term" value="P:angiogenesis"/>
    <property type="evidence" value="ECO:0000270"/>
    <property type="project" value="UniProtKB"/>
</dbReference>
<dbReference type="GO" id="GO:0003180">
    <property type="term" value="P:aortic valve morphogenesis"/>
    <property type="evidence" value="ECO:0000250"/>
    <property type="project" value="BHF-UCL"/>
</dbReference>
<dbReference type="GO" id="GO:0060842">
    <property type="term" value="P:arterial endothelial cell differentiation"/>
    <property type="evidence" value="ECO:0000250"/>
    <property type="project" value="BHF-UCL"/>
</dbReference>
<dbReference type="GO" id="GO:0003190">
    <property type="term" value="P:atrioventricular valve formation"/>
    <property type="evidence" value="ECO:0000250"/>
    <property type="project" value="BHF-UCL"/>
</dbReference>
<dbReference type="GO" id="GO:0003161">
    <property type="term" value="P:cardiac conduction system development"/>
    <property type="evidence" value="ECO:0000303"/>
    <property type="project" value="BHF-UCL"/>
</dbReference>
<dbReference type="GO" id="GO:0060317">
    <property type="term" value="P:cardiac epithelial to mesenchymal transition"/>
    <property type="evidence" value="ECO:0000250"/>
    <property type="project" value="BHF-UCL"/>
</dbReference>
<dbReference type="GO" id="GO:0060411">
    <property type="term" value="P:cardiac septum morphogenesis"/>
    <property type="evidence" value="ECO:0000250"/>
    <property type="project" value="BHF-UCL"/>
</dbReference>
<dbReference type="GO" id="GO:0003208">
    <property type="term" value="P:cardiac ventricle morphogenesis"/>
    <property type="evidence" value="ECO:0000250"/>
    <property type="project" value="BHF-UCL"/>
</dbReference>
<dbReference type="GO" id="GO:0072359">
    <property type="term" value="P:circulatory system development"/>
    <property type="evidence" value="ECO:0000318"/>
    <property type="project" value="GO_Central"/>
</dbReference>
<dbReference type="GO" id="GO:0035912">
    <property type="term" value="P:dorsal aorta morphogenesis"/>
    <property type="evidence" value="ECO:0000250"/>
    <property type="project" value="BHF-UCL"/>
</dbReference>
<dbReference type="GO" id="GO:0003203">
    <property type="term" value="P:endocardial cushion morphogenesis"/>
    <property type="evidence" value="ECO:0000250"/>
    <property type="project" value="BHF-UCL"/>
</dbReference>
<dbReference type="GO" id="GO:0060347">
    <property type="term" value="P:heart trabecula formation"/>
    <property type="evidence" value="ECO:0000250"/>
    <property type="project" value="BHF-UCL"/>
</dbReference>
<dbReference type="GO" id="GO:0060716">
    <property type="term" value="P:labyrinthine layer blood vessel development"/>
    <property type="evidence" value="ECO:0000250"/>
    <property type="project" value="BHF-UCL"/>
</dbReference>
<dbReference type="GO" id="GO:0070168">
    <property type="term" value="P:negative regulation of biomineral tissue development"/>
    <property type="evidence" value="ECO:0000250"/>
    <property type="project" value="BHF-UCL"/>
</dbReference>
<dbReference type="GO" id="GO:0045892">
    <property type="term" value="P:negative regulation of DNA-templated transcription"/>
    <property type="evidence" value="ECO:0000314"/>
    <property type="project" value="UniProtKB"/>
</dbReference>
<dbReference type="GO" id="GO:0045665">
    <property type="term" value="P:negative regulation of neuron differentiation"/>
    <property type="evidence" value="ECO:0000318"/>
    <property type="project" value="GO_Central"/>
</dbReference>
<dbReference type="GO" id="GO:0045746">
    <property type="term" value="P:negative regulation of Notch signaling pathway"/>
    <property type="evidence" value="ECO:0000314"/>
    <property type="project" value="BHF-UCL"/>
</dbReference>
<dbReference type="GO" id="GO:0051151">
    <property type="term" value="P:negative regulation of smooth muscle cell differentiation"/>
    <property type="evidence" value="ECO:0000314"/>
    <property type="project" value="BHF-UCL"/>
</dbReference>
<dbReference type="GO" id="GO:0000122">
    <property type="term" value="P:negative regulation of transcription by RNA polymerase II"/>
    <property type="evidence" value="ECO:0000314"/>
    <property type="project" value="UniProtKB"/>
</dbReference>
<dbReference type="GO" id="GO:0007219">
    <property type="term" value="P:Notch signaling pathway"/>
    <property type="evidence" value="ECO:0000314"/>
    <property type="project" value="UniProtKB"/>
</dbReference>
<dbReference type="GO" id="GO:0045944">
    <property type="term" value="P:positive regulation of transcription by RNA polymerase II"/>
    <property type="evidence" value="ECO:0000250"/>
    <property type="project" value="BHF-UCL"/>
</dbReference>
<dbReference type="GO" id="GO:0003184">
    <property type="term" value="P:pulmonary valve morphogenesis"/>
    <property type="evidence" value="ECO:0000250"/>
    <property type="project" value="BHF-UCL"/>
</dbReference>
<dbReference type="GO" id="GO:0050767">
    <property type="term" value="P:regulation of neurogenesis"/>
    <property type="evidence" value="ECO:0000318"/>
    <property type="project" value="GO_Central"/>
</dbReference>
<dbReference type="GO" id="GO:2001212">
    <property type="term" value="P:regulation of vasculogenesis"/>
    <property type="evidence" value="ECO:0000250"/>
    <property type="project" value="BHF-UCL"/>
</dbReference>
<dbReference type="GO" id="GO:0036304">
    <property type="term" value="P:umbilical cord morphogenesis"/>
    <property type="evidence" value="ECO:0000250"/>
    <property type="project" value="BHF-UCL"/>
</dbReference>
<dbReference type="GO" id="GO:0060412">
    <property type="term" value="P:ventricular septum morphogenesis"/>
    <property type="evidence" value="ECO:0000250"/>
    <property type="project" value="BHF-UCL"/>
</dbReference>
<dbReference type="FunFam" id="4.10.280.10:FF:000012">
    <property type="entry name" value="hairy/enhancer-of-split related with YRPW motif protein 1"/>
    <property type="match status" value="1"/>
</dbReference>
<dbReference type="Gene3D" id="6.10.250.980">
    <property type="match status" value="1"/>
</dbReference>
<dbReference type="Gene3D" id="4.10.280.10">
    <property type="entry name" value="Helix-loop-helix DNA-binding domain"/>
    <property type="match status" value="1"/>
</dbReference>
<dbReference type="InterPro" id="IPR011598">
    <property type="entry name" value="bHLH_dom"/>
</dbReference>
<dbReference type="InterPro" id="IPR050370">
    <property type="entry name" value="HES_HEY"/>
</dbReference>
<dbReference type="InterPro" id="IPR036638">
    <property type="entry name" value="HLH_DNA-bd_sf"/>
</dbReference>
<dbReference type="InterPro" id="IPR003650">
    <property type="entry name" value="Orange_dom"/>
</dbReference>
<dbReference type="PANTHER" id="PTHR10985">
    <property type="entry name" value="BASIC HELIX-LOOP-HELIX TRANSCRIPTION FACTOR, HES-RELATED"/>
    <property type="match status" value="1"/>
</dbReference>
<dbReference type="Pfam" id="PF07527">
    <property type="entry name" value="Hairy_orange"/>
    <property type="match status" value="1"/>
</dbReference>
<dbReference type="Pfam" id="PF00010">
    <property type="entry name" value="HLH"/>
    <property type="match status" value="1"/>
</dbReference>
<dbReference type="SMART" id="SM00353">
    <property type="entry name" value="HLH"/>
    <property type="match status" value="1"/>
</dbReference>
<dbReference type="SMART" id="SM00511">
    <property type="entry name" value="ORANGE"/>
    <property type="match status" value="1"/>
</dbReference>
<dbReference type="SUPFAM" id="SSF47459">
    <property type="entry name" value="HLH, helix-loop-helix DNA-binding domain"/>
    <property type="match status" value="1"/>
</dbReference>
<dbReference type="SUPFAM" id="SSF158457">
    <property type="entry name" value="Orange domain-like"/>
    <property type="match status" value="1"/>
</dbReference>
<dbReference type="PROSITE" id="PS50888">
    <property type="entry name" value="BHLH"/>
    <property type="match status" value="1"/>
</dbReference>
<dbReference type="PROSITE" id="PS51054">
    <property type="entry name" value="ORANGE"/>
    <property type="match status" value="1"/>
</dbReference>
<feature type="chain" id="PRO_0000127217" description="Hairy/enhancer-of-split related with YRPW motif protein 1">
    <location>
        <begin position="1"/>
        <end position="304"/>
    </location>
</feature>
<feature type="domain" description="bHLH" evidence="4">
    <location>
        <begin position="49"/>
        <end position="104"/>
    </location>
</feature>
<feature type="domain" description="Orange" evidence="3">
    <location>
        <begin position="122"/>
        <end position="158"/>
    </location>
</feature>
<feature type="region of interest" description="Disordered" evidence="5">
    <location>
        <begin position="1"/>
        <end position="52"/>
    </location>
</feature>
<feature type="region of interest" description="Transcriptional repression and interaction with NCOR1 and SIN3A" evidence="1">
    <location>
        <begin position="48"/>
        <end position="117"/>
    </location>
</feature>
<feature type="region of interest" description="Disordered" evidence="5">
    <location>
        <begin position="196"/>
        <end position="234"/>
    </location>
</feature>
<feature type="short sequence motif" description="YRPW motif">
    <location>
        <begin position="294"/>
        <end position="297"/>
    </location>
</feature>
<feature type="compositionally biased region" description="Polar residues" evidence="5">
    <location>
        <begin position="28"/>
        <end position="47"/>
    </location>
</feature>
<feature type="compositionally biased region" description="Polar residues" evidence="5">
    <location>
        <begin position="200"/>
        <end position="210"/>
    </location>
</feature>
<feature type="splice variant" id="VSP_040997" description="In isoform 2." evidence="10">
    <original>K</original>
    <variation>KQVME</variation>
    <location>
        <position position="82"/>
    </location>
</feature>
<feature type="sequence conflict" description="In Ref. 5; AAF37297." evidence="11" ref="5">
    <original>L</original>
    <variation>F</variation>
    <location>
        <position position="237"/>
    </location>
</feature>
<feature type="sequence conflict" description="In Ref. 8; BAC03890." evidence="11" ref="8">
    <original>L</original>
    <variation>P</variation>
    <location>
        <position position="237"/>
    </location>
</feature>
<feature type="sequence conflict" description="In Ref. 5; AAF37297." evidence="11" ref="5">
    <original>P</original>
    <variation>L</variation>
    <location>
        <position position="252"/>
    </location>
</feature>
<feature type="helix" evidence="12">
    <location>
        <begin position="115"/>
        <end position="120"/>
    </location>
</feature>
<feature type="helix" evidence="12">
    <location>
        <begin position="122"/>
        <end position="140"/>
    </location>
</feature>
<feature type="helix" evidence="12">
    <location>
        <begin position="149"/>
        <end position="164"/>
    </location>
</feature>
<reference key="1">
    <citation type="journal article" date="1999" name="Biochem. Biophys. Res. Commun.">
        <title>Identification and expression of a novel family of bHLH cDNAs related to Drosophila hairy and enhancer of split.</title>
        <authorList>
            <person name="Kokubo H."/>
            <person name="Lun Y."/>
            <person name="Johnson R.L."/>
        </authorList>
    </citation>
    <scope>NUCLEOTIDE SEQUENCE [MRNA] (ISOFORM 1)</scope>
    <source>
        <tissue>Brain</tissue>
    </source>
</reference>
<reference key="2">
    <citation type="journal article" date="1999" name="Mech. Dev.">
        <title>Hey genes: a novel subfamily of hairy- and enhancer of split related genes specifically expressed during mouse embryogenesis.</title>
        <authorList>
            <person name="Leimeister C."/>
            <person name="Externbrinck A."/>
            <person name="Klamt B."/>
            <person name="Gessler M."/>
        </authorList>
    </citation>
    <scope>NUCLEOTIDE SEQUENCE [MRNA] (ISOFORM 1)</scope>
</reference>
<reference key="3">
    <citation type="journal article" date="2000" name="Genomics">
        <title>Characterization of the human and mouse HEY1, HEY2, and HEYL genes: cloning, mapping, and mutation screening of a new bHLH gene family.</title>
        <authorList>
            <person name="Steidl C."/>
            <person name="Leimeister C."/>
            <person name="Klamt B."/>
            <person name="Maier M."/>
            <person name="Nanda I."/>
            <person name="Dixon M."/>
            <person name="Clarke R."/>
            <person name="Schmid M."/>
            <person name="Gessler M."/>
        </authorList>
    </citation>
    <scope>NUCLEOTIDE SEQUENCE [MRNA] (ISOFORM 1)</scope>
</reference>
<reference key="4">
    <citation type="journal article" date="2000" name="J. Biol. Chem.">
        <title>Cardiovascular basic helix loop helix factor 1, a novel transcriptional repressor expressed preferentially in the developing and adult cardiovascular system.</title>
        <authorList>
            <person name="Chin M.T."/>
            <person name="Maemura K."/>
            <person name="Fukumoto S."/>
            <person name="Jain M.K."/>
            <person name="Layne M.D."/>
            <person name="Watanabe M."/>
            <person name="Hsieh C.-M."/>
            <person name="Lee M.-E."/>
        </authorList>
    </citation>
    <scope>NUCLEOTIDE SEQUENCE [MRNA] (ISOFORM 1)</scope>
</reference>
<reference key="5">
    <citation type="submission" date="2000-02" db="EMBL/GenBank/DDBJ databases">
        <title>The HERP repressors, novel partners for HES/hairy in notch signaling.</title>
        <authorList>
            <person name="Iso T."/>
            <person name="Sartorelli V."/>
            <person name="Poizat C."/>
            <person name="Chen T."/>
            <person name="Sucov H.M."/>
            <person name="Chung G."/>
            <person name="Wu H.-Y."/>
            <person name="Kedes L."/>
            <person name="Hamamori Y."/>
        </authorList>
    </citation>
    <scope>NUCLEOTIDE SEQUENCE [MRNA] (ISOFORM 1)</scope>
</reference>
<reference key="6">
    <citation type="journal article" date="2000" name="Proc. Natl. Acad. Sci. U.S.A.">
        <title>Members of the HRT family of basic helix-loop-helix proteins act as transcriptional repressors downstream of Notch signaling.</title>
        <authorList>
            <person name="Nakagawa O."/>
            <person name="McFadden D.G."/>
            <person name="Nakagawa M."/>
            <person name="Yanagisawa H."/>
            <person name="Hu T."/>
            <person name="Srivastava D."/>
            <person name="Olson E.N."/>
        </authorList>
    </citation>
    <scope>NUCLEOTIDE SEQUENCE [MRNA] (ISOFORM 1)</scope>
    <scope>FUNCTION</scope>
    <scope>DNA-BINDING</scope>
</reference>
<reference key="7">
    <citation type="submission" date="2004-10" db="EMBL/GenBank/DDBJ databases">
        <title>Cloning of human full-length CDSs in BD Creator(TM) system donor vector.</title>
        <authorList>
            <person name="Kalnine N."/>
            <person name="Chen X."/>
            <person name="Rolfs A."/>
            <person name="Halleck A."/>
            <person name="Hines L."/>
            <person name="Eisenstein S."/>
            <person name="Koundinya M."/>
            <person name="Raphael J."/>
            <person name="Moreira D."/>
            <person name="Kelley T."/>
            <person name="LaBaer J."/>
            <person name="Lin Y."/>
            <person name="Phelan M."/>
            <person name="Farmer A."/>
        </authorList>
    </citation>
    <scope>NUCLEOTIDE SEQUENCE [LARGE SCALE MRNA] (ISOFORM 1)</scope>
</reference>
<reference key="8">
    <citation type="journal article" date="2004" name="Nat. Genet.">
        <title>Complete sequencing and characterization of 21,243 full-length human cDNAs.</title>
        <authorList>
            <person name="Ota T."/>
            <person name="Suzuki Y."/>
            <person name="Nishikawa T."/>
            <person name="Otsuki T."/>
            <person name="Sugiyama T."/>
            <person name="Irie R."/>
            <person name="Wakamatsu A."/>
            <person name="Hayashi K."/>
            <person name="Sato H."/>
            <person name="Nagai K."/>
            <person name="Kimura K."/>
            <person name="Makita H."/>
            <person name="Sekine M."/>
            <person name="Obayashi M."/>
            <person name="Nishi T."/>
            <person name="Shibahara T."/>
            <person name="Tanaka T."/>
            <person name="Ishii S."/>
            <person name="Yamamoto J."/>
            <person name="Saito K."/>
            <person name="Kawai Y."/>
            <person name="Isono Y."/>
            <person name="Nakamura Y."/>
            <person name="Nagahari K."/>
            <person name="Murakami K."/>
            <person name="Yasuda T."/>
            <person name="Iwayanagi T."/>
            <person name="Wagatsuma M."/>
            <person name="Shiratori A."/>
            <person name="Sudo H."/>
            <person name="Hosoiri T."/>
            <person name="Kaku Y."/>
            <person name="Kodaira H."/>
            <person name="Kondo H."/>
            <person name="Sugawara M."/>
            <person name="Takahashi M."/>
            <person name="Kanda K."/>
            <person name="Yokoi T."/>
            <person name="Furuya T."/>
            <person name="Kikkawa E."/>
            <person name="Omura Y."/>
            <person name="Abe K."/>
            <person name="Kamihara K."/>
            <person name="Katsuta N."/>
            <person name="Sato K."/>
            <person name="Tanikawa M."/>
            <person name="Yamazaki M."/>
            <person name="Ninomiya K."/>
            <person name="Ishibashi T."/>
            <person name="Yamashita H."/>
            <person name="Murakawa K."/>
            <person name="Fujimori K."/>
            <person name="Tanai H."/>
            <person name="Kimata M."/>
            <person name="Watanabe M."/>
            <person name="Hiraoka S."/>
            <person name="Chiba Y."/>
            <person name="Ishida S."/>
            <person name="Ono Y."/>
            <person name="Takiguchi S."/>
            <person name="Watanabe S."/>
            <person name="Yosida M."/>
            <person name="Hotuta T."/>
            <person name="Kusano J."/>
            <person name="Kanehori K."/>
            <person name="Takahashi-Fujii A."/>
            <person name="Hara H."/>
            <person name="Tanase T.-O."/>
            <person name="Nomura Y."/>
            <person name="Togiya S."/>
            <person name="Komai F."/>
            <person name="Hara R."/>
            <person name="Takeuchi K."/>
            <person name="Arita M."/>
            <person name="Imose N."/>
            <person name="Musashino K."/>
            <person name="Yuuki H."/>
            <person name="Oshima A."/>
            <person name="Sasaki N."/>
            <person name="Aotsuka S."/>
            <person name="Yoshikawa Y."/>
            <person name="Matsunawa H."/>
            <person name="Ichihara T."/>
            <person name="Shiohata N."/>
            <person name="Sano S."/>
            <person name="Moriya S."/>
            <person name="Momiyama H."/>
            <person name="Satoh N."/>
            <person name="Takami S."/>
            <person name="Terashima Y."/>
            <person name="Suzuki O."/>
            <person name="Nakagawa S."/>
            <person name="Senoh A."/>
            <person name="Mizoguchi H."/>
            <person name="Goto Y."/>
            <person name="Shimizu F."/>
            <person name="Wakebe H."/>
            <person name="Hishigaki H."/>
            <person name="Watanabe T."/>
            <person name="Sugiyama A."/>
            <person name="Takemoto M."/>
            <person name="Kawakami B."/>
            <person name="Yamazaki M."/>
            <person name="Watanabe K."/>
            <person name="Kumagai A."/>
            <person name="Itakura S."/>
            <person name="Fukuzumi Y."/>
            <person name="Fujimori Y."/>
            <person name="Komiyama M."/>
            <person name="Tashiro H."/>
            <person name="Tanigami A."/>
            <person name="Fujiwara T."/>
            <person name="Ono T."/>
            <person name="Yamada K."/>
            <person name="Fujii Y."/>
            <person name="Ozaki K."/>
            <person name="Hirao M."/>
            <person name="Ohmori Y."/>
            <person name="Kawabata A."/>
            <person name="Hikiji T."/>
            <person name="Kobatake N."/>
            <person name="Inagaki H."/>
            <person name="Ikema Y."/>
            <person name="Okamoto S."/>
            <person name="Okitani R."/>
            <person name="Kawakami T."/>
            <person name="Noguchi S."/>
            <person name="Itoh T."/>
            <person name="Shigeta K."/>
            <person name="Senba T."/>
            <person name="Matsumura K."/>
            <person name="Nakajima Y."/>
            <person name="Mizuno T."/>
            <person name="Morinaga M."/>
            <person name="Sasaki M."/>
            <person name="Togashi T."/>
            <person name="Oyama M."/>
            <person name="Hata H."/>
            <person name="Watanabe M."/>
            <person name="Komatsu T."/>
            <person name="Mizushima-Sugano J."/>
            <person name="Satoh T."/>
            <person name="Shirai Y."/>
            <person name="Takahashi Y."/>
            <person name="Nakagawa K."/>
            <person name="Okumura K."/>
            <person name="Nagase T."/>
            <person name="Nomura N."/>
            <person name="Kikuchi H."/>
            <person name="Masuho Y."/>
            <person name="Yamashita R."/>
            <person name="Nakai K."/>
            <person name="Yada T."/>
            <person name="Nakamura Y."/>
            <person name="Ohara O."/>
            <person name="Isogai T."/>
            <person name="Sugano S."/>
        </authorList>
    </citation>
    <scope>NUCLEOTIDE SEQUENCE [LARGE SCALE MRNA] (ISOFORMS 1 AND 2)</scope>
    <source>
        <tissue>Placenta</tissue>
    </source>
</reference>
<reference key="9">
    <citation type="journal article" date="2006" name="Nature">
        <title>DNA sequence and analysis of human chromosome 8.</title>
        <authorList>
            <person name="Nusbaum C."/>
            <person name="Mikkelsen T.S."/>
            <person name="Zody M.C."/>
            <person name="Asakawa S."/>
            <person name="Taudien S."/>
            <person name="Garber M."/>
            <person name="Kodira C.D."/>
            <person name="Schueler M.G."/>
            <person name="Shimizu A."/>
            <person name="Whittaker C.A."/>
            <person name="Chang J.L."/>
            <person name="Cuomo C.A."/>
            <person name="Dewar K."/>
            <person name="FitzGerald M.G."/>
            <person name="Yang X."/>
            <person name="Allen N.R."/>
            <person name="Anderson S."/>
            <person name="Asakawa T."/>
            <person name="Blechschmidt K."/>
            <person name="Bloom T."/>
            <person name="Borowsky M.L."/>
            <person name="Butler J."/>
            <person name="Cook A."/>
            <person name="Corum B."/>
            <person name="DeArellano K."/>
            <person name="DeCaprio D."/>
            <person name="Dooley K.T."/>
            <person name="Dorris L. III"/>
            <person name="Engels R."/>
            <person name="Gloeckner G."/>
            <person name="Hafez N."/>
            <person name="Hagopian D.S."/>
            <person name="Hall J.L."/>
            <person name="Ishikawa S.K."/>
            <person name="Jaffe D.B."/>
            <person name="Kamat A."/>
            <person name="Kudoh J."/>
            <person name="Lehmann R."/>
            <person name="Lokitsang T."/>
            <person name="Macdonald P."/>
            <person name="Major J.E."/>
            <person name="Matthews C.D."/>
            <person name="Mauceli E."/>
            <person name="Menzel U."/>
            <person name="Mihalev A.H."/>
            <person name="Minoshima S."/>
            <person name="Murayama Y."/>
            <person name="Naylor J.W."/>
            <person name="Nicol R."/>
            <person name="Nguyen C."/>
            <person name="O'Leary S.B."/>
            <person name="O'Neill K."/>
            <person name="Parker S.C.J."/>
            <person name="Polley A."/>
            <person name="Raymond C.K."/>
            <person name="Reichwald K."/>
            <person name="Rodriguez J."/>
            <person name="Sasaki T."/>
            <person name="Schilhabel M."/>
            <person name="Siddiqui R."/>
            <person name="Smith C.L."/>
            <person name="Sneddon T.P."/>
            <person name="Talamas J.A."/>
            <person name="Tenzin P."/>
            <person name="Topham K."/>
            <person name="Venkataraman V."/>
            <person name="Wen G."/>
            <person name="Yamazaki S."/>
            <person name="Young S.K."/>
            <person name="Zeng Q."/>
            <person name="Zimmer A.R."/>
            <person name="Rosenthal A."/>
            <person name="Birren B.W."/>
            <person name="Platzer M."/>
            <person name="Shimizu N."/>
            <person name="Lander E.S."/>
        </authorList>
    </citation>
    <scope>NUCLEOTIDE SEQUENCE [LARGE SCALE GENOMIC DNA]</scope>
</reference>
<reference key="10">
    <citation type="submission" date="2005-07" db="EMBL/GenBank/DDBJ databases">
        <authorList>
            <person name="Mural R.J."/>
            <person name="Istrail S."/>
            <person name="Sutton G.G."/>
            <person name="Florea L."/>
            <person name="Halpern A.L."/>
            <person name="Mobarry C.M."/>
            <person name="Lippert R."/>
            <person name="Walenz B."/>
            <person name="Shatkay H."/>
            <person name="Dew I."/>
            <person name="Miller J.R."/>
            <person name="Flanigan M.J."/>
            <person name="Edwards N.J."/>
            <person name="Bolanos R."/>
            <person name="Fasulo D."/>
            <person name="Halldorsson B.V."/>
            <person name="Hannenhalli S."/>
            <person name="Turner R."/>
            <person name="Yooseph S."/>
            <person name="Lu F."/>
            <person name="Nusskern D.R."/>
            <person name="Shue B.C."/>
            <person name="Zheng X.H."/>
            <person name="Zhong F."/>
            <person name="Delcher A.L."/>
            <person name="Huson D.H."/>
            <person name="Kravitz S.A."/>
            <person name="Mouchard L."/>
            <person name="Reinert K."/>
            <person name="Remington K.A."/>
            <person name="Clark A.G."/>
            <person name="Waterman M.S."/>
            <person name="Eichler E.E."/>
            <person name="Adams M.D."/>
            <person name="Hunkapiller M.W."/>
            <person name="Myers E.W."/>
            <person name="Venter J.C."/>
        </authorList>
    </citation>
    <scope>NUCLEOTIDE SEQUENCE [LARGE SCALE GENOMIC DNA]</scope>
</reference>
<reference key="11">
    <citation type="journal article" date="2004" name="Genome Res.">
        <title>The status, quality, and expansion of the NIH full-length cDNA project: the Mammalian Gene Collection (MGC).</title>
        <authorList>
            <consortium name="The MGC Project Team"/>
        </authorList>
    </citation>
    <scope>NUCLEOTIDE SEQUENCE [LARGE SCALE MRNA] (ISOFORM 1)</scope>
    <source>
        <tissue>Lung</tissue>
    </source>
</reference>
<reference key="12">
    <citation type="journal article" date="2004" name="J. Biol. Chem.">
        <title>Hairy-related transcription factors inhibit GATA-dependent cardiac gene expression through a signal-responsive mechanism.</title>
        <authorList>
            <person name="Kathiriya I.S."/>
            <person name="King I.N."/>
            <person name="Murakami M."/>
            <person name="Nakagawa M."/>
            <person name="Astle J.M."/>
            <person name="Gardner K.A."/>
            <person name="Gerard R.D."/>
            <person name="Olson E.N."/>
            <person name="Srivastava D."/>
            <person name="Nakagawa O."/>
        </authorList>
    </citation>
    <scope>FUNCTION</scope>
</reference>
<reference key="13">
    <citation type="journal article" date="2015" name="Nat. Commun.">
        <title>C8orf4 negatively regulates self-renewal of liver cancer stem cells via suppression of NOTCH2 signalling.</title>
        <authorList>
            <person name="Zhu P."/>
            <person name="Wang Y."/>
            <person name="Du Y."/>
            <person name="He L."/>
            <person name="Huang G."/>
            <person name="Zhang G."/>
            <person name="Yan X."/>
            <person name="Fan Z."/>
        </authorList>
    </citation>
    <scope>FUNCTION</scope>
</reference>
<reference key="14">
    <citation type="journal article" date="2015" name="PLoS ONE">
        <title>Hey bHLH Proteins Interact with a FBXO45 Containing SCF Ubiquitin Ligase Complex and Induce Its Translocation into the Nucleus.</title>
        <authorList>
            <person name="Salat D."/>
            <person name="Winkler A."/>
            <person name="Urlaub H."/>
            <person name="Gessler M."/>
        </authorList>
    </citation>
    <scope>FUNCTION</scope>
    <scope>INTERACTION WITH FBXO45</scope>
    <scope>SUBCELLULAR LOCATION</scope>
</reference>
<reference key="15">
    <citation type="submission" date="2009-02" db="PDB data bank">
        <title>Crystal structure of hypothetical protein MS0332.</title>
        <authorList>
            <consortium name="RIKEN structural genomics initiative (RSGI)"/>
        </authorList>
    </citation>
    <scope>X-RAY CRYSTALLOGRAPHY (1.9 ANGSTROMS) OF 111-167</scope>
</reference>
<organism>
    <name type="scientific">Homo sapiens</name>
    <name type="common">Human</name>
    <dbReference type="NCBI Taxonomy" id="9606"/>
    <lineage>
        <taxon>Eukaryota</taxon>
        <taxon>Metazoa</taxon>
        <taxon>Chordata</taxon>
        <taxon>Craniata</taxon>
        <taxon>Vertebrata</taxon>
        <taxon>Euteleostomi</taxon>
        <taxon>Mammalia</taxon>
        <taxon>Eutheria</taxon>
        <taxon>Euarchontoglires</taxon>
        <taxon>Primates</taxon>
        <taxon>Haplorrhini</taxon>
        <taxon>Catarrhini</taxon>
        <taxon>Hominidae</taxon>
        <taxon>Homo</taxon>
    </lineage>
</organism>
<sequence>MKRAHPEYSSSDSELDETIEVEKESADENGNLSSALGSMSPTTSSQILARKRRRGIIEKRRRDRINNSLSELRRLVPSAFEKQGSAKLEKAEILQMTVDHLKMLHTAGGKGYFDAHALAMDYRSLGFRECLAEVARYLSIIEGLDASDPLRVRLVSHLNNYASQREAASGAHAGLGHIPWGTVFGHHPHIAHPLLLPQNGHGNAGTTASPTEPHHQGRLGSAHPEAPALRAPPSGSLGPVLPVVTSASKLSPPLLSSVASLSAFPFSFGSFHLLSPNALSPSAPTQAANLGKPYRPWGTEIGAF</sequence>
<keyword id="KW-0002">3D-structure</keyword>
<keyword id="KW-0025">Alternative splicing</keyword>
<keyword id="KW-0217">Developmental protein</keyword>
<keyword id="KW-0238">DNA-binding</keyword>
<keyword id="KW-0914">Notch signaling pathway</keyword>
<keyword id="KW-0539">Nucleus</keyword>
<keyword id="KW-1267">Proteomics identification</keyword>
<keyword id="KW-1185">Reference proteome</keyword>
<keyword id="KW-0678">Repressor</keyword>
<keyword id="KW-0804">Transcription</keyword>
<keyword id="KW-0805">Transcription regulation</keyword>
<proteinExistence type="evidence at protein level"/>
<accession>Q9Y5J3</accession>
<accession>B2R883</accession>
<accession>Q5TZS3</accession>
<accession>Q8NAM2</accession>
<accession>Q9NYP4</accession>
<evidence type="ECO:0000250" key="1"/>
<evidence type="ECO:0000250" key="2">
    <source>
        <dbReference type="UniProtKB" id="Q9WV93"/>
    </source>
</evidence>
<evidence type="ECO:0000255" key="3">
    <source>
        <dbReference type="PROSITE-ProRule" id="PRU00380"/>
    </source>
</evidence>
<evidence type="ECO:0000255" key="4">
    <source>
        <dbReference type="PROSITE-ProRule" id="PRU00981"/>
    </source>
</evidence>
<evidence type="ECO:0000256" key="5">
    <source>
        <dbReference type="SAM" id="MobiDB-lite"/>
    </source>
</evidence>
<evidence type="ECO:0000269" key="6">
    <source>
    </source>
</evidence>
<evidence type="ECO:0000269" key="7">
    <source>
    </source>
</evidence>
<evidence type="ECO:0000269" key="8">
    <source>
    </source>
</evidence>
<evidence type="ECO:0000269" key="9">
    <source>
    </source>
</evidence>
<evidence type="ECO:0000303" key="10">
    <source>
    </source>
</evidence>
<evidence type="ECO:0000305" key="11"/>
<evidence type="ECO:0007829" key="12">
    <source>
        <dbReference type="PDB" id="2DB7"/>
    </source>
</evidence>
<comment type="function">
    <text evidence="2 6 7 8">Transcriptional repressor which binds preferentially to the canonical E box sequence 5'-CACGTG-3' (PubMed:11095750). Downstream effector of Notch signaling required for cardiovascular development. Specifically required for the Notch-induced endocardial epithelial to mesenchymal transition, which is itself criticial for cardiac valve and septum development. May be required in conjunction with HEY2 to specify arterial cell fate or identity. Promotes maintenance of neuronal precursor cells and glial versus neuronal fate specification. Represses transcription by the cardiac transcriptional activators GATA4 and GATA6 and by the neuronal bHLH factors ASCL1/MASH1 and NEUROD4/MATH3 (PubMed:15485867). Involved in the regulation of liver cancer cells self-renewal (PubMed:25985737).</text>
</comment>
<comment type="subunit">
    <text evidence="1">Self-associates. Interacts with HES1 and HEYL. Interacts with HDAC1, NCOR1 and SIN3A. Interacts with GATA4 and GATA6. Interacts with CCDC89/BOIP.</text>
</comment>
<comment type="interaction">
    <interactant intactId="EBI-7231130">
        <id>Q9Y5J3</id>
    </interactant>
    <interactant intactId="EBI-724310">
        <id>Q15038</id>
        <label>DAZAP2</label>
    </interactant>
    <organismsDiffer>false</organismsDiffer>
    <experiments>3</experiments>
</comment>
<comment type="interaction">
    <interactant intactId="EBI-7231130">
        <id>Q9Y5J3</id>
    </interactant>
    <interactant intactId="EBI-1759806">
        <id>O75593</id>
        <label>FOXH1</label>
    </interactant>
    <organismsDiffer>false</organismsDiffer>
    <experiments>3</experiments>
</comment>
<comment type="interaction">
    <interactant intactId="EBI-7231130">
        <id>Q9Y5J3</id>
    </interactant>
    <interactant intactId="EBI-750630">
        <id>Q9UBP5</id>
        <label>HEY2</label>
    </interactant>
    <organismsDiffer>false</organismsDiffer>
    <experiments>2</experiments>
</comment>
<comment type="interaction">
    <interactant intactId="EBI-7231130">
        <id>Q9Y5J3</id>
    </interactant>
    <interactant intactId="EBI-11962084">
        <id>Q3LI66</id>
        <label>KRTAP6-2</label>
    </interactant>
    <organismsDiffer>false</organismsDiffer>
    <experiments>3</experiments>
</comment>
<comment type="interaction">
    <interactant intactId="EBI-7231130">
        <id>Q9Y5J3</id>
    </interactant>
    <interactant intactId="EBI-12138495">
        <id>Q99697-2</id>
        <label>PITX2</label>
    </interactant>
    <organismsDiffer>false</organismsDiffer>
    <experiments>3</experiments>
</comment>
<comment type="interaction">
    <interactant intactId="EBI-7231130">
        <id>Q9Y5J3</id>
    </interactant>
    <interactant intactId="EBI-373552">
        <id>Q96CS7</id>
        <label>PLEKHB2</label>
    </interactant>
    <organismsDiffer>false</organismsDiffer>
    <experiments>3</experiments>
</comment>
<comment type="interaction">
    <interactant intactId="EBI-7231130">
        <id>Q9Y5J3</id>
    </interactant>
    <interactant intactId="EBI-744726">
        <id>Q8NEK8</id>
        <label>TENT5D</label>
    </interactant>
    <organismsDiffer>false</organismsDiffer>
    <experiments>3</experiments>
</comment>
<comment type="interaction">
    <interactant intactId="EBI-7231130">
        <id>Q9Y5J3</id>
    </interactant>
    <interactant intactId="EBI-1051237">
        <id>Q9BYJ9</id>
        <label>YTHDF1</label>
    </interactant>
    <organismsDiffer>false</organismsDiffer>
    <experiments>3</experiments>
</comment>
<comment type="subcellular location">
    <subcellularLocation>
        <location evidence="3 4 9">Nucleus</location>
    </subcellularLocation>
</comment>
<comment type="alternative products">
    <event type="alternative splicing"/>
    <isoform>
        <id>Q9Y5J3-1</id>
        <name>1</name>
        <sequence type="displayed"/>
    </isoform>
    <isoform>
        <id>Q9Y5J3-2</id>
        <name>2</name>
        <sequence type="described" ref="VSP_040997"/>
    </isoform>
</comment>
<comment type="tissue specificity">
    <text>Expressed in the somitic mesoderm, the central nervous system, the kidney, the heart, nasal epithelium, and limbs.</text>
</comment>
<comment type="similarity">
    <text evidence="11">Belongs to the HEY family.</text>
</comment>
<protein>
    <recommendedName>
        <fullName>Hairy/enhancer-of-split related with YRPW motif protein 1</fullName>
    </recommendedName>
    <alternativeName>
        <fullName>Cardiovascular helix-loop-helix factor 2</fullName>
        <shortName>CHF-2</shortName>
    </alternativeName>
    <alternativeName>
        <fullName>Class B basic helix-loop-helix protein 31</fullName>
        <shortName>bHLHb31</shortName>
    </alternativeName>
    <alternativeName>
        <fullName>HES-related repressor protein 1</fullName>
    </alternativeName>
    <alternativeName>
        <fullName>Hairy and enhancer of split-related protein 1</fullName>
        <shortName>HESR-1</shortName>
    </alternativeName>
    <alternativeName>
        <fullName>Hairy-related transcription factor 1</fullName>
        <shortName>HRT-1</shortName>
        <shortName>hHRT1</shortName>
    </alternativeName>
</protein>